<organism>
    <name type="scientific">Listeria monocytogenes serotype 4b (strain CLIP80459)</name>
    <dbReference type="NCBI Taxonomy" id="568819"/>
    <lineage>
        <taxon>Bacteria</taxon>
        <taxon>Bacillati</taxon>
        <taxon>Bacillota</taxon>
        <taxon>Bacilli</taxon>
        <taxon>Bacillales</taxon>
        <taxon>Listeriaceae</taxon>
        <taxon>Listeria</taxon>
    </lineage>
</organism>
<evidence type="ECO:0000255" key="1">
    <source>
        <dbReference type="HAMAP-Rule" id="MF_00249"/>
    </source>
</evidence>
<protein>
    <recommendedName>
        <fullName evidence="1">ATP-dependent protease ATPase subunit HslU</fullName>
    </recommendedName>
    <alternativeName>
        <fullName evidence="1">Unfoldase HslU</fullName>
    </alternativeName>
</protein>
<proteinExistence type="inferred from homology"/>
<dbReference type="EMBL" id="FM242711">
    <property type="protein sequence ID" value="CAS05053.1"/>
    <property type="molecule type" value="Genomic_DNA"/>
</dbReference>
<dbReference type="RefSeq" id="WP_003727514.1">
    <property type="nucleotide sequence ID" value="NC_012488.1"/>
</dbReference>
<dbReference type="SMR" id="C1L2I7"/>
<dbReference type="KEGG" id="lmc:Lm4b_01289"/>
<dbReference type="HOGENOM" id="CLU_033123_0_0_9"/>
<dbReference type="GO" id="GO:0009376">
    <property type="term" value="C:HslUV protease complex"/>
    <property type="evidence" value="ECO:0007669"/>
    <property type="project" value="UniProtKB-UniRule"/>
</dbReference>
<dbReference type="GO" id="GO:0005524">
    <property type="term" value="F:ATP binding"/>
    <property type="evidence" value="ECO:0007669"/>
    <property type="project" value="UniProtKB-UniRule"/>
</dbReference>
<dbReference type="GO" id="GO:0016887">
    <property type="term" value="F:ATP hydrolysis activity"/>
    <property type="evidence" value="ECO:0007669"/>
    <property type="project" value="InterPro"/>
</dbReference>
<dbReference type="GO" id="GO:0008233">
    <property type="term" value="F:peptidase activity"/>
    <property type="evidence" value="ECO:0007669"/>
    <property type="project" value="InterPro"/>
</dbReference>
<dbReference type="GO" id="GO:0036402">
    <property type="term" value="F:proteasome-activating activity"/>
    <property type="evidence" value="ECO:0007669"/>
    <property type="project" value="UniProtKB-UniRule"/>
</dbReference>
<dbReference type="GO" id="GO:0043335">
    <property type="term" value="P:protein unfolding"/>
    <property type="evidence" value="ECO:0007669"/>
    <property type="project" value="UniProtKB-UniRule"/>
</dbReference>
<dbReference type="GO" id="GO:0051603">
    <property type="term" value="P:proteolysis involved in protein catabolic process"/>
    <property type="evidence" value="ECO:0007669"/>
    <property type="project" value="TreeGrafter"/>
</dbReference>
<dbReference type="CDD" id="cd19498">
    <property type="entry name" value="RecA-like_HslU"/>
    <property type="match status" value="1"/>
</dbReference>
<dbReference type="Gene3D" id="1.10.8.60">
    <property type="match status" value="1"/>
</dbReference>
<dbReference type="Gene3D" id="3.40.50.300">
    <property type="entry name" value="P-loop containing nucleotide triphosphate hydrolases"/>
    <property type="match status" value="2"/>
</dbReference>
<dbReference type="HAMAP" id="MF_00249">
    <property type="entry name" value="HslU"/>
    <property type="match status" value="1"/>
</dbReference>
<dbReference type="InterPro" id="IPR003593">
    <property type="entry name" value="AAA+_ATPase"/>
</dbReference>
<dbReference type="InterPro" id="IPR050052">
    <property type="entry name" value="ATP-dep_Clp_protease_ClpX"/>
</dbReference>
<dbReference type="InterPro" id="IPR003959">
    <property type="entry name" value="ATPase_AAA_core"/>
</dbReference>
<dbReference type="InterPro" id="IPR019489">
    <property type="entry name" value="Clp_ATPase_C"/>
</dbReference>
<dbReference type="InterPro" id="IPR004491">
    <property type="entry name" value="HslU"/>
</dbReference>
<dbReference type="InterPro" id="IPR027417">
    <property type="entry name" value="P-loop_NTPase"/>
</dbReference>
<dbReference type="NCBIfam" id="TIGR00390">
    <property type="entry name" value="hslU"/>
    <property type="match status" value="1"/>
</dbReference>
<dbReference type="NCBIfam" id="NF003544">
    <property type="entry name" value="PRK05201.1"/>
    <property type="match status" value="1"/>
</dbReference>
<dbReference type="PANTHER" id="PTHR48102">
    <property type="entry name" value="ATP-DEPENDENT CLP PROTEASE ATP-BINDING SUBUNIT CLPX-LIKE, MITOCHONDRIAL-RELATED"/>
    <property type="match status" value="1"/>
</dbReference>
<dbReference type="PANTHER" id="PTHR48102:SF3">
    <property type="entry name" value="ATP-DEPENDENT PROTEASE ATPASE SUBUNIT HSLU"/>
    <property type="match status" value="1"/>
</dbReference>
<dbReference type="Pfam" id="PF00004">
    <property type="entry name" value="AAA"/>
    <property type="match status" value="1"/>
</dbReference>
<dbReference type="Pfam" id="PF07724">
    <property type="entry name" value="AAA_2"/>
    <property type="match status" value="1"/>
</dbReference>
<dbReference type="Pfam" id="PF10431">
    <property type="entry name" value="ClpB_D2-small"/>
    <property type="match status" value="1"/>
</dbReference>
<dbReference type="SMART" id="SM00382">
    <property type="entry name" value="AAA"/>
    <property type="match status" value="1"/>
</dbReference>
<dbReference type="SMART" id="SM01086">
    <property type="entry name" value="ClpB_D2-small"/>
    <property type="match status" value="1"/>
</dbReference>
<dbReference type="SUPFAM" id="SSF52540">
    <property type="entry name" value="P-loop containing nucleoside triphosphate hydrolases"/>
    <property type="match status" value="1"/>
</dbReference>
<accession>C1L2I7</accession>
<sequence length="469" mass="53188">MTNITLMNQLTPKQIVEKLDQYIIGQTGAKKSVAVALRNRYRRQLMDESIRDEIIPKNILMIGPTGVGKTEIARRIAKIVRAPFSKVEATKFTEVGYVGRDVESMVRDLVEVSVRLVKEEKMQLVRVKAEKNAEKRLIKLLAPSQKKKQTTSQNPLEALFGGMNQPDESPEEEVDQELKNKRSQIEWRLQNGELDDEIVTVEVKEQQNPMLDMMRGAGMDQMNGMQDALSGMFPAKKKKRKVTVREAKKILFEDEASKLIDADELAAEGIHRAEQMGMIFIDEIDKIASKEGGGNAQVSREGVQRDILPIVEGSQISTKYGTVNTEYILFIAAGAFHMSKPSDLIPELQGRFPIRIELDKLTQEDFYKILTEPDNALIKQYKALLKTEGIDLIFTKEAVERIAEIAFQVNQDSDNIGARRLHTILEKLLEDLLFEAPEINMESIKVTENYVNEKLAPIMQNKDLTQFIL</sequence>
<reference key="1">
    <citation type="journal article" date="2012" name="BMC Genomics">
        <title>Comparative genomics and transcriptomics of lineages I, II, and III strains of Listeria monocytogenes.</title>
        <authorList>
            <person name="Hain T."/>
            <person name="Ghai R."/>
            <person name="Billion A."/>
            <person name="Kuenne C.T."/>
            <person name="Steinweg C."/>
            <person name="Izar B."/>
            <person name="Mohamed W."/>
            <person name="Mraheil M."/>
            <person name="Domann E."/>
            <person name="Schaffrath S."/>
            <person name="Karst U."/>
            <person name="Goesmann A."/>
            <person name="Oehm S."/>
            <person name="Puhler A."/>
            <person name="Merkl R."/>
            <person name="Vorwerk S."/>
            <person name="Glaser P."/>
            <person name="Garrido P."/>
            <person name="Rusniok C."/>
            <person name="Buchrieser C."/>
            <person name="Goebel W."/>
            <person name="Chakraborty T."/>
        </authorList>
    </citation>
    <scope>NUCLEOTIDE SEQUENCE [LARGE SCALE GENOMIC DNA]</scope>
    <source>
        <strain>CLIP80459</strain>
    </source>
</reference>
<keyword id="KW-0067">ATP-binding</keyword>
<keyword id="KW-0143">Chaperone</keyword>
<keyword id="KW-0963">Cytoplasm</keyword>
<keyword id="KW-0547">Nucleotide-binding</keyword>
<feature type="chain" id="PRO_1000204525" description="ATP-dependent protease ATPase subunit HslU">
    <location>
        <begin position="1"/>
        <end position="469"/>
    </location>
</feature>
<feature type="binding site" evidence="1">
    <location>
        <position position="24"/>
    </location>
    <ligand>
        <name>ATP</name>
        <dbReference type="ChEBI" id="CHEBI:30616"/>
    </ligand>
</feature>
<feature type="binding site" evidence="1">
    <location>
        <begin position="66"/>
        <end position="71"/>
    </location>
    <ligand>
        <name>ATP</name>
        <dbReference type="ChEBI" id="CHEBI:30616"/>
    </ligand>
</feature>
<feature type="binding site" evidence="1">
    <location>
        <position position="282"/>
    </location>
    <ligand>
        <name>ATP</name>
        <dbReference type="ChEBI" id="CHEBI:30616"/>
    </ligand>
</feature>
<feature type="binding site" evidence="1">
    <location>
        <position position="347"/>
    </location>
    <ligand>
        <name>ATP</name>
        <dbReference type="ChEBI" id="CHEBI:30616"/>
    </ligand>
</feature>
<feature type="binding site" evidence="1">
    <location>
        <position position="419"/>
    </location>
    <ligand>
        <name>ATP</name>
        <dbReference type="ChEBI" id="CHEBI:30616"/>
    </ligand>
</feature>
<gene>
    <name evidence="1" type="primary">hslU</name>
    <name type="ordered locus">Lm4b_01289</name>
</gene>
<name>HSLU_LISMC</name>
<comment type="function">
    <text evidence="1">ATPase subunit of a proteasome-like degradation complex; this subunit has chaperone activity. The binding of ATP and its subsequent hydrolysis by HslU are essential for unfolding of protein substrates subsequently hydrolyzed by HslV. HslU recognizes the N-terminal part of its protein substrates and unfolds these before they are guided to HslV for hydrolysis.</text>
</comment>
<comment type="subunit">
    <text evidence="1">A double ring-shaped homohexamer of HslV is capped on each side by a ring-shaped HslU homohexamer. The assembly of the HslU/HslV complex is dependent on binding of ATP.</text>
</comment>
<comment type="subcellular location">
    <subcellularLocation>
        <location evidence="1">Cytoplasm</location>
    </subcellularLocation>
</comment>
<comment type="similarity">
    <text evidence="1">Belongs to the ClpX chaperone family. HslU subfamily.</text>
</comment>